<reference key="1">
    <citation type="journal article" date="1994" name="Curr. Top. Microbiol. Immunol.">
        <title>Primer-directed sequencing of human papillomavirus types.</title>
        <authorList>
            <person name="Delius H."/>
            <person name="Hofmann B."/>
        </authorList>
    </citation>
    <scope>NUCLEOTIDE SEQUENCE [GENOMIC DNA]</scope>
</reference>
<accession>P36760</accession>
<organism>
    <name type="scientific">Human papillomavirus 40</name>
    <dbReference type="NCBI Taxonomy" id="10615"/>
    <lineage>
        <taxon>Viruses</taxon>
        <taxon>Monodnaviria</taxon>
        <taxon>Shotokuvirae</taxon>
        <taxon>Cossaviricota</taxon>
        <taxon>Papovaviricetes</taxon>
        <taxon>Zurhausenvirales</taxon>
        <taxon>Papillomaviridae</taxon>
        <taxon>Firstpapillomavirinae</taxon>
        <taxon>Alphapapillomavirus</taxon>
        <taxon>Alphapapillomavirus 8</taxon>
    </lineage>
</organism>
<dbReference type="EMBL" id="X74478">
    <property type="protein sequence ID" value="CAA52571.1"/>
    <property type="molecule type" value="Genomic_DNA"/>
</dbReference>
<dbReference type="PIR" id="S36559">
    <property type="entry name" value="S36559"/>
</dbReference>
<dbReference type="Proteomes" id="UP000009121">
    <property type="component" value="Genome"/>
</dbReference>
<dbReference type="GO" id="GO:0043657">
    <property type="term" value="C:host cell"/>
    <property type="evidence" value="ECO:0007669"/>
    <property type="project" value="GOC"/>
</dbReference>
<dbReference type="GO" id="GO:0044174">
    <property type="term" value="C:host cell endosome"/>
    <property type="evidence" value="ECO:0007669"/>
    <property type="project" value="UniProtKB-KW"/>
</dbReference>
<dbReference type="GO" id="GO:0044177">
    <property type="term" value="C:host cell Golgi apparatus"/>
    <property type="evidence" value="ECO:0007669"/>
    <property type="project" value="UniProtKB-SubCell"/>
</dbReference>
<dbReference type="GO" id="GO:0042025">
    <property type="term" value="C:host cell nucleus"/>
    <property type="evidence" value="ECO:0007669"/>
    <property type="project" value="UniProtKB-SubCell"/>
</dbReference>
<dbReference type="GO" id="GO:0019028">
    <property type="term" value="C:viral capsid"/>
    <property type="evidence" value="ECO:0007669"/>
    <property type="project" value="UniProtKB-UniRule"/>
</dbReference>
<dbReference type="GO" id="GO:0003677">
    <property type="term" value="F:DNA binding"/>
    <property type="evidence" value="ECO:0007669"/>
    <property type="project" value="UniProtKB-UniRule"/>
</dbReference>
<dbReference type="GO" id="GO:0005198">
    <property type="term" value="F:structural molecule activity"/>
    <property type="evidence" value="ECO:0007669"/>
    <property type="project" value="UniProtKB-UniRule"/>
</dbReference>
<dbReference type="GO" id="GO:0075521">
    <property type="term" value="P:microtubule-dependent intracellular transport of viral material towards nucleus"/>
    <property type="evidence" value="ECO:0007669"/>
    <property type="project" value="UniProtKB-UniRule"/>
</dbReference>
<dbReference type="GO" id="GO:0046718">
    <property type="term" value="P:symbiont entry into host cell"/>
    <property type="evidence" value="ECO:0007669"/>
    <property type="project" value="UniProtKB-KW"/>
</dbReference>
<dbReference type="GO" id="GO:0075732">
    <property type="term" value="P:viral penetration into host nucleus"/>
    <property type="evidence" value="ECO:0007669"/>
    <property type="project" value="UniProtKB-KW"/>
</dbReference>
<dbReference type="HAMAP" id="MF_04003">
    <property type="entry name" value="PPV_L2"/>
    <property type="match status" value="1"/>
</dbReference>
<dbReference type="InterPro" id="IPR000784">
    <property type="entry name" value="Late_L2"/>
</dbReference>
<dbReference type="Pfam" id="PF00513">
    <property type="entry name" value="Late_protein_L2"/>
    <property type="match status" value="1"/>
</dbReference>
<protein>
    <recommendedName>
        <fullName evidence="1">Minor capsid protein L2</fullName>
    </recommendedName>
</protein>
<proteinExistence type="inferred from homology"/>
<gene>
    <name evidence="1" type="primary">L2</name>
</gene>
<keyword id="KW-0167">Capsid protein</keyword>
<keyword id="KW-1176">Cytoplasmic inwards viral transport</keyword>
<keyword id="KW-1015">Disulfide bond</keyword>
<keyword id="KW-0238">DNA-binding</keyword>
<keyword id="KW-1039">Host endosome</keyword>
<keyword id="KW-1040">Host Golgi apparatus</keyword>
<keyword id="KW-1048">Host nucleus</keyword>
<keyword id="KW-0945">Host-virus interaction</keyword>
<keyword id="KW-0426">Late protein</keyword>
<keyword id="KW-1177">Microtubular inwards viral transport</keyword>
<keyword id="KW-0597">Phosphoprotein</keyword>
<keyword id="KW-1163">Viral penetration into host nucleus</keyword>
<keyword id="KW-0946">Virion</keyword>
<keyword id="KW-1160">Virus entry into host cell</keyword>
<feature type="chain" id="PRO_0000133607" description="Minor capsid protein L2">
    <location>
        <begin position="1"/>
        <end position="467"/>
    </location>
</feature>
<feature type="short sequence motif" description="Nuclear localization signal" evidence="1">
    <location>
        <begin position="1"/>
        <end position="12"/>
    </location>
</feature>
<feature type="short sequence motif" description="Nuclear localization signal" evidence="1">
    <location>
        <begin position="452"/>
        <end position="462"/>
    </location>
</feature>
<feature type="disulfide bond" evidence="1">
    <location>
        <begin position="21"/>
        <end position="27"/>
    </location>
</feature>
<sequence>MVSSRPRRRKRASATQLYQTCKAAGTCPPDVVHKVEQTTVADQILKWGSMGVFFGGLGIGSGSGTGGRAGYVPLSTGSRAVPPKSLVPDVVARPPVVVDTVAPSDPSIVSLIEESSIIQSGAPSLTIPTEGGFSVTSSGTDVPAILDVSSTNTVHVTATTHHNPVFTDPSVVQPIPPVEAGGRLIVSHSTITTSAAEEIPLDTFVVHSDPLSSTPVPGTSGRPRLGLYSKALQQVEIVDPAFLSTPQRLITYDNPVFENVDDTLQFEQPSIHDAPDPAFMDIITLHRPALTSRRGVIRFSRVGQRGTMYTRRGTRIGGRVHFFRDISPIGAADDIELHPLVASAPHTLETPHTLETPLDTTDALFDVYADMDTIDDDAAYATFSLHPADSTRISNTSIPLATVSDTLLTSGPDIVFPSIPAGTPYLPVSPSIPAISVLIHGTDYYLHPAYYLRKRRKRILAHQYVAT</sequence>
<comment type="function">
    <text evidence="1">Minor protein of the capsid that localizes along the inner surface of the virion, within the central cavities beneath the L1 pentamers. Plays a role in capsid stabilization through interaction with the major capsid protein L1. Once the virion enters the host cell, L2 escorts the genomic DNA into the nucleus by promoting escape from the endosomal compartments and traffic through the host Golgi network. Mechanistically, the C-terminus of L2 possesses a cell-penetrating peptide that protudes from the host endosome, interacts with host cytoplasmic retromer cargo and thereby mediates the capsid delivery to the host trans-Golgi network. Plays a role through its interaction with host dynein in the intracellular microtubule-dependent transport of viral capsid toward the nucleus. Mediates the viral genome import into the nucleus through binding to host importins. Once within the nucleus, L2 localizes viral genomes to host PML bodies in order to activate early gene expression for establishment of infection. Later on, promotes late gene expression by interacting with the viral E2 protein and by inhibiting its transcriptional activation functions. During virion assembly, encapsidates the genome by direct interaction with the viral DNA.</text>
</comment>
<comment type="subunit">
    <text evidence="1">Interacts with major capsid protein L1. Interacts with E2; this interaction inhibits E2 transcriptional activity but not the DNA replication function E2. Interacts with host GADD45GIP1. Interacts with host HSPA8; this interaction is required for L2 nuclear translocation. Interacts with host importins KPNB2 and KPNB3. Forms a complex with importin alpha2-beta1 heterodimers via interaction with the importin alpha2 adapter. Interacts with host DYNLT1; this interaction is essential for virus intracellular transport during entry. Interacts (via C-terminus) with host retromer subunits VPS35 and VPS29.</text>
</comment>
<comment type="subcellular location">
    <subcellularLocation>
        <location evidence="1">Virion</location>
    </subcellularLocation>
    <subcellularLocation>
        <location evidence="1">Host nucleus</location>
    </subcellularLocation>
    <subcellularLocation>
        <location evidence="1">Host early endosome</location>
    </subcellularLocation>
    <subcellularLocation>
        <location evidence="1">Host Golgi apparatus</location>
    </subcellularLocation>
</comment>
<comment type="PTM">
    <text evidence="1">Highly phosphorylated.</text>
</comment>
<comment type="similarity">
    <text evidence="1">Belongs to the papillomaviridae L2 protein family.</text>
</comment>
<name>VL2_HPV40</name>
<organismHost>
    <name type="scientific">Homo sapiens</name>
    <name type="common">Human</name>
    <dbReference type="NCBI Taxonomy" id="9606"/>
</organismHost>
<evidence type="ECO:0000255" key="1">
    <source>
        <dbReference type="HAMAP-Rule" id="MF_04003"/>
    </source>
</evidence>